<accession>Q9LNQ4</accession>
<sequence>MARGRIRSKLRLSHIYTFGCLRPSADEGQDPHPIQGPGFSRTVYCNQPHMHKKKPLKYRSNYVSTTRYNLITFFPKCLYEQFHRAANFYFLVAAILSVFPLSPFNKWSMIAPLVFVVGLSMLKEALEDWSRFMQDVKINASKVYVHKSDGEFRRRKWKKISVGDIVKVEKDGFFPADLLLLSSSYEDGICYVETMNLDGETNLKVKRSLEVTLSLDDYDSFKDFTGIIRCEDPNPSLYTFVGNLEYERQIFPLDPSQILLRDSKLRNTPYVYGVVVFTGHDTKVMQNSTKSPSKRSRIEKTMDYIIYTLLVLLILISCISSSGFAWETKFHMPKWWYLRPEEPENLTNPSNPVYAGFVHLITALLLYGYLIPISLYVSIEVVKVLQASFINKDLHMYDSESGVPAHARTSNLNEELGQVDTILSDKTGTLTCNQMDFLKCSIAGTSYGVRSSEVEVAAAQQMAVDLDEHGEVSSRTSTPRAQARDIEVESSITPRIPIKGFGFEDIRLMDGNWLREPHTDDILLFFRILAICHTAIPELNEETGKYTYEAESPDEASFLTAASEFGFVFFKRTQSSVYVHERLSHSGQTIEREYKVLNLLDFTSKRKRMSVVVRDEEGQILLLCKGADSIIFERLAKNGKVYLGPTTKHLNEYGEAGLRTLALSYRKLDEEEYSAWNAEFHKAKTSIGSDRDELLERISDMIEKDLILVGATAVEDKLQKGVPQCIDKLAQAGLKLWVLTGDKMETAINIGYSCSLLRQGMKQICITVVNSEGASQDAKAVKDNILNQITKAVQMVKLEKDPHAAFALIIDGKTLTYALEDEMKYQFLALAVDCASVICCRVSPKQKALVTRLVKEGTGKITLAIGDGANDVGMIQEADIGVGISGVEGMQAVMASDFSIAQFRFLERLLVVHGHWCYKRIAQMICYFFYKNIAFGLTLFYFEAFTGFSGQSVYNDYYLLLFNVVLTSLPVIALGVFEQDVSSEICLQFPALYQQGKKNLFFDWYRILGWMGNGVYSSLVIFFLNIGIIYEQAFRVSGQTADMDAVGTTMFTCIIWAVNVQIALTVSHFTWIQHVLIWGSIGLWYLFVALYGMMPPSLSGNIYRILVEILAPAPIYWIATFLVTVTTVLPYFAHISFQRFLHPLDHHIIQEIKYYKRDVEDRRMWTRERTKAREKTKIGFTARVDAKIRHLRSKLNKKQSNMSQFSTQDTMSPRSV</sequence>
<dbReference type="EC" id="7.6.2.1" evidence="7"/>
<dbReference type="EMBL" id="AC022492">
    <property type="protein sequence ID" value="AAF79467.1"/>
    <property type="status" value="ALT_SEQ"/>
    <property type="molecule type" value="Genomic_DNA"/>
</dbReference>
<dbReference type="EMBL" id="CP002684">
    <property type="protein sequence ID" value="AEE29599.1"/>
    <property type="molecule type" value="Genomic_DNA"/>
</dbReference>
<dbReference type="EMBL" id="CP002684">
    <property type="protein sequence ID" value="ANM58607.1"/>
    <property type="molecule type" value="Genomic_DNA"/>
</dbReference>
<dbReference type="RefSeq" id="NP_001319028.1">
    <property type="nucleotide sequence ID" value="NM_001332307.1"/>
</dbReference>
<dbReference type="RefSeq" id="NP_173193.2">
    <property type="nucleotide sequence ID" value="NM_101612.3"/>
</dbReference>
<dbReference type="SMR" id="Q9LNQ4"/>
<dbReference type="BioGRID" id="23564">
    <property type="interactions" value="1"/>
</dbReference>
<dbReference type="FunCoup" id="Q9LNQ4">
    <property type="interactions" value="1437"/>
</dbReference>
<dbReference type="STRING" id="3702.Q9LNQ4"/>
<dbReference type="iPTMnet" id="Q9LNQ4"/>
<dbReference type="SwissPalm" id="Q9LNQ4"/>
<dbReference type="PaxDb" id="3702-AT1G17500.1"/>
<dbReference type="ProteomicsDB" id="244969"/>
<dbReference type="EnsemblPlants" id="AT1G17500.1">
    <property type="protein sequence ID" value="AT1G17500.1"/>
    <property type="gene ID" value="AT1G17500"/>
</dbReference>
<dbReference type="EnsemblPlants" id="AT1G17500.2">
    <property type="protein sequence ID" value="AT1G17500.2"/>
    <property type="gene ID" value="AT1G17500"/>
</dbReference>
<dbReference type="GeneID" id="838324"/>
<dbReference type="Gramene" id="AT1G17500.1">
    <property type="protein sequence ID" value="AT1G17500.1"/>
    <property type="gene ID" value="AT1G17500"/>
</dbReference>
<dbReference type="Gramene" id="AT1G17500.2">
    <property type="protein sequence ID" value="AT1G17500.2"/>
    <property type="gene ID" value="AT1G17500"/>
</dbReference>
<dbReference type="KEGG" id="ath:AT1G17500"/>
<dbReference type="Araport" id="AT1G17500"/>
<dbReference type="TAIR" id="AT1G17500">
    <property type="gene designation" value="ALA4"/>
</dbReference>
<dbReference type="eggNOG" id="KOG0206">
    <property type="taxonomic scope" value="Eukaryota"/>
</dbReference>
<dbReference type="HOGENOM" id="CLU_000846_3_1_1"/>
<dbReference type="InParanoid" id="Q9LNQ4"/>
<dbReference type="OMA" id="KHTYKKT"/>
<dbReference type="OrthoDB" id="377733at2759"/>
<dbReference type="PhylomeDB" id="Q9LNQ4"/>
<dbReference type="BioCyc" id="ARA:AT1G17500-MONOMER"/>
<dbReference type="PRO" id="PR:Q9LNQ4"/>
<dbReference type="Proteomes" id="UP000006548">
    <property type="component" value="Chromosome 1"/>
</dbReference>
<dbReference type="ExpressionAtlas" id="Q9LNQ4">
    <property type="expression patterns" value="baseline and differential"/>
</dbReference>
<dbReference type="GO" id="GO:0005783">
    <property type="term" value="C:endoplasmic reticulum"/>
    <property type="evidence" value="ECO:0000314"/>
    <property type="project" value="TAIR"/>
</dbReference>
<dbReference type="GO" id="GO:0005886">
    <property type="term" value="C:plasma membrane"/>
    <property type="evidence" value="ECO:0000314"/>
    <property type="project" value="TAIR"/>
</dbReference>
<dbReference type="GO" id="GO:0005524">
    <property type="term" value="F:ATP binding"/>
    <property type="evidence" value="ECO:0007669"/>
    <property type="project" value="UniProtKB-KW"/>
</dbReference>
<dbReference type="GO" id="GO:0016887">
    <property type="term" value="F:ATP hydrolysis activity"/>
    <property type="evidence" value="ECO:0007669"/>
    <property type="project" value="InterPro"/>
</dbReference>
<dbReference type="GO" id="GO:0140326">
    <property type="term" value="F:ATPase-coupled intramembrane lipid transporter activity"/>
    <property type="evidence" value="ECO:0007669"/>
    <property type="project" value="UniProtKB-EC"/>
</dbReference>
<dbReference type="GO" id="GO:0000287">
    <property type="term" value="F:magnesium ion binding"/>
    <property type="evidence" value="ECO:0007669"/>
    <property type="project" value="InterPro"/>
</dbReference>
<dbReference type="GO" id="GO:0015914">
    <property type="term" value="P:phospholipid transport"/>
    <property type="evidence" value="ECO:0007669"/>
    <property type="project" value="InterPro"/>
</dbReference>
<dbReference type="GO" id="GO:1901703">
    <property type="term" value="P:protein localization involved in auxin polar transport"/>
    <property type="evidence" value="ECO:0000316"/>
    <property type="project" value="TAIR"/>
</dbReference>
<dbReference type="CDD" id="cd02073">
    <property type="entry name" value="P-type_ATPase_APLT_Dnf-like"/>
    <property type="match status" value="1"/>
</dbReference>
<dbReference type="FunFam" id="2.70.150.10:FF:000023">
    <property type="entry name" value="Phospholipid-transporting ATPase"/>
    <property type="match status" value="1"/>
</dbReference>
<dbReference type="FunFam" id="3.40.1110.10:FF:000050">
    <property type="entry name" value="Phospholipid-transporting ATPase"/>
    <property type="match status" value="1"/>
</dbReference>
<dbReference type="FunFam" id="3.40.50.1000:FF:000014">
    <property type="entry name" value="Phospholipid-transporting ATPase"/>
    <property type="match status" value="1"/>
</dbReference>
<dbReference type="Gene3D" id="3.40.1110.10">
    <property type="entry name" value="Calcium-transporting ATPase, cytoplasmic domain N"/>
    <property type="match status" value="1"/>
</dbReference>
<dbReference type="Gene3D" id="2.70.150.10">
    <property type="entry name" value="Calcium-transporting ATPase, cytoplasmic transduction domain A"/>
    <property type="match status" value="1"/>
</dbReference>
<dbReference type="Gene3D" id="3.40.50.1000">
    <property type="entry name" value="HAD superfamily/HAD-like"/>
    <property type="match status" value="1"/>
</dbReference>
<dbReference type="InterPro" id="IPR023299">
    <property type="entry name" value="ATPase_P-typ_cyto_dom_N"/>
</dbReference>
<dbReference type="InterPro" id="IPR018303">
    <property type="entry name" value="ATPase_P-typ_P_site"/>
</dbReference>
<dbReference type="InterPro" id="IPR023298">
    <property type="entry name" value="ATPase_P-typ_TM_dom_sf"/>
</dbReference>
<dbReference type="InterPro" id="IPR008250">
    <property type="entry name" value="ATPase_P-typ_transduc_dom_A_sf"/>
</dbReference>
<dbReference type="InterPro" id="IPR036412">
    <property type="entry name" value="HAD-like_sf"/>
</dbReference>
<dbReference type="InterPro" id="IPR023214">
    <property type="entry name" value="HAD_sf"/>
</dbReference>
<dbReference type="InterPro" id="IPR006539">
    <property type="entry name" value="P-type_ATPase_IV"/>
</dbReference>
<dbReference type="InterPro" id="IPR032631">
    <property type="entry name" value="P-type_ATPase_N"/>
</dbReference>
<dbReference type="InterPro" id="IPR001757">
    <property type="entry name" value="P_typ_ATPase"/>
</dbReference>
<dbReference type="InterPro" id="IPR032630">
    <property type="entry name" value="P_typ_ATPase_c"/>
</dbReference>
<dbReference type="InterPro" id="IPR044492">
    <property type="entry name" value="P_typ_ATPase_HD_dom"/>
</dbReference>
<dbReference type="NCBIfam" id="TIGR01652">
    <property type="entry name" value="ATPase-Plipid"/>
    <property type="match status" value="1"/>
</dbReference>
<dbReference type="NCBIfam" id="TIGR01494">
    <property type="entry name" value="ATPase_P-type"/>
    <property type="match status" value="2"/>
</dbReference>
<dbReference type="PANTHER" id="PTHR24092:SF193">
    <property type="entry name" value="PHOSPHOLIPID-TRANSPORTING ATPASE 4-RELATED"/>
    <property type="match status" value="1"/>
</dbReference>
<dbReference type="PANTHER" id="PTHR24092">
    <property type="entry name" value="PROBABLE PHOSPHOLIPID-TRANSPORTING ATPASE"/>
    <property type="match status" value="1"/>
</dbReference>
<dbReference type="Pfam" id="PF13246">
    <property type="entry name" value="Cation_ATPase"/>
    <property type="match status" value="1"/>
</dbReference>
<dbReference type="Pfam" id="PF16212">
    <property type="entry name" value="PhoLip_ATPase_C"/>
    <property type="match status" value="1"/>
</dbReference>
<dbReference type="Pfam" id="PF16209">
    <property type="entry name" value="PhoLip_ATPase_N"/>
    <property type="match status" value="1"/>
</dbReference>
<dbReference type="PRINTS" id="PR00119">
    <property type="entry name" value="CATATPASE"/>
</dbReference>
<dbReference type="SFLD" id="SFLDS00003">
    <property type="entry name" value="Haloacid_Dehalogenase"/>
    <property type="match status" value="1"/>
</dbReference>
<dbReference type="SFLD" id="SFLDF00027">
    <property type="entry name" value="p-type_atpase"/>
    <property type="match status" value="1"/>
</dbReference>
<dbReference type="SUPFAM" id="SSF81653">
    <property type="entry name" value="Calcium ATPase, transduction domain A"/>
    <property type="match status" value="1"/>
</dbReference>
<dbReference type="SUPFAM" id="SSF81665">
    <property type="entry name" value="Calcium ATPase, transmembrane domain M"/>
    <property type="match status" value="1"/>
</dbReference>
<dbReference type="SUPFAM" id="SSF56784">
    <property type="entry name" value="HAD-like"/>
    <property type="match status" value="1"/>
</dbReference>
<dbReference type="SUPFAM" id="SSF81660">
    <property type="entry name" value="Metal cation-transporting ATPase, ATP-binding domain N"/>
    <property type="match status" value="1"/>
</dbReference>
<dbReference type="PROSITE" id="PS00154">
    <property type="entry name" value="ATPASE_E1_E2"/>
    <property type="match status" value="1"/>
</dbReference>
<protein>
    <recommendedName>
        <fullName evidence="5">Probable phospholipid-transporting ATPase 4</fullName>
        <shortName evidence="5">AtALA4</shortName>
        <ecNumber evidence="7">7.6.2.1</ecNumber>
    </recommendedName>
    <alternativeName>
        <fullName evidence="5">Aminophospholipid flippase 4</fullName>
    </alternativeName>
</protein>
<reference key="1">
    <citation type="journal article" date="2000" name="Nature">
        <title>Sequence and analysis of chromosome 1 of the plant Arabidopsis thaliana.</title>
        <authorList>
            <person name="Theologis A."/>
            <person name="Ecker J.R."/>
            <person name="Palm C.J."/>
            <person name="Federspiel N.A."/>
            <person name="Kaul S."/>
            <person name="White O."/>
            <person name="Alonso J."/>
            <person name="Altafi H."/>
            <person name="Araujo R."/>
            <person name="Bowman C.L."/>
            <person name="Brooks S.Y."/>
            <person name="Buehler E."/>
            <person name="Chan A."/>
            <person name="Chao Q."/>
            <person name="Chen H."/>
            <person name="Cheuk R.F."/>
            <person name="Chin C.W."/>
            <person name="Chung M.K."/>
            <person name="Conn L."/>
            <person name="Conway A.B."/>
            <person name="Conway A.R."/>
            <person name="Creasy T.H."/>
            <person name="Dewar K."/>
            <person name="Dunn P."/>
            <person name="Etgu P."/>
            <person name="Feldblyum T.V."/>
            <person name="Feng J.-D."/>
            <person name="Fong B."/>
            <person name="Fujii C.Y."/>
            <person name="Gill J.E."/>
            <person name="Goldsmith A.D."/>
            <person name="Haas B."/>
            <person name="Hansen N.F."/>
            <person name="Hughes B."/>
            <person name="Huizar L."/>
            <person name="Hunter J.L."/>
            <person name="Jenkins J."/>
            <person name="Johnson-Hopson C."/>
            <person name="Khan S."/>
            <person name="Khaykin E."/>
            <person name="Kim C.J."/>
            <person name="Koo H.L."/>
            <person name="Kremenetskaia I."/>
            <person name="Kurtz D.B."/>
            <person name="Kwan A."/>
            <person name="Lam B."/>
            <person name="Langin-Hooper S."/>
            <person name="Lee A."/>
            <person name="Lee J.M."/>
            <person name="Lenz C.A."/>
            <person name="Li J.H."/>
            <person name="Li Y.-P."/>
            <person name="Lin X."/>
            <person name="Liu S.X."/>
            <person name="Liu Z.A."/>
            <person name="Luros J.S."/>
            <person name="Maiti R."/>
            <person name="Marziali A."/>
            <person name="Militscher J."/>
            <person name="Miranda M."/>
            <person name="Nguyen M."/>
            <person name="Nierman W.C."/>
            <person name="Osborne B.I."/>
            <person name="Pai G."/>
            <person name="Peterson J."/>
            <person name="Pham P.K."/>
            <person name="Rizzo M."/>
            <person name="Rooney T."/>
            <person name="Rowley D."/>
            <person name="Sakano H."/>
            <person name="Salzberg S.L."/>
            <person name="Schwartz J.R."/>
            <person name="Shinn P."/>
            <person name="Southwick A.M."/>
            <person name="Sun H."/>
            <person name="Tallon L.J."/>
            <person name="Tambunga G."/>
            <person name="Toriumi M.J."/>
            <person name="Town C.D."/>
            <person name="Utterback T."/>
            <person name="Van Aken S."/>
            <person name="Vaysberg M."/>
            <person name="Vysotskaia V.S."/>
            <person name="Walker M."/>
            <person name="Wu D."/>
            <person name="Yu G."/>
            <person name="Fraser C.M."/>
            <person name="Venter J.C."/>
            <person name="Davis R.W."/>
        </authorList>
    </citation>
    <scope>NUCLEOTIDE SEQUENCE [LARGE SCALE GENOMIC DNA]</scope>
    <source>
        <strain>cv. Columbia</strain>
    </source>
</reference>
<reference key="2">
    <citation type="journal article" date="2017" name="Plant J.">
        <title>Araport11: a complete reannotation of the Arabidopsis thaliana reference genome.</title>
        <authorList>
            <person name="Cheng C.Y."/>
            <person name="Krishnakumar V."/>
            <person name="Chan A.P."/>
            <person name="Thibaud-Nissen F."/>
            <person name="Schobel S."/>
            <person name="Town C.D."/>
        </authorList>
    </citation>
    <scope>GENOME REANNOTATION</scope>
    <source>
        <strain>cv. Columbia</strain>
    </source>
</reference>
<reference key="3">
    <citation type="journal article" date="2001" name="Plant Physiol.">
        <title>Inventory of the superfamily of P-type ion pumps in Arabidopsis.</title>
        <authorList>
            <person name="Axelsen K.B."/>
            <person name="Palmgren M.G."/>
        </authorList>
    </citation>
    <scope>GENE FAMILY</scope>
    <scope>NOMENCLATURE</scope>
</reference>
<evidence type="ECO:0000250" key="1"/>
<evidence type="ECO:0000250" key="2">
    <source>
        <dbReference type="UniProtKB" id="Q9SLK6"/>
    </source>
</evidence>
<evidence type="ECO:0000255" key="3"/>
<evidence type="ECO:0000256" key="4">
    <source>
        <dbReference type="SAM" id="MobiDB-lite"/>
    </source>
</evidence>
<evidence type="ECO:0000303" key="5">
    <source>
    </source>
</evidence>
<evidence type="ECO:0000305" key="6"/>
<evidence type="ECO:0000305" key="7">
    <source>
    </source>
</evidence>
<evidence type="ECO:0000312" key="8">
    <source>
        <dbReference type="Araport" id="AT1G17500"/>
    </source>
</evidence>
<evidence type="ECO:0000312" key="9">
    <source>
        <dbReference type="EMBL" id="AAF79467.1"/>
    </source>
</evidence>
<gene>
    <name evidence="5" type="primary">ALA4</name>
    <name evidence="8" type="ordered locus">At1g17500</name>
    <name evidence="9" type="ORF">F1L3.21</name>
</gene>
<name>ALA4_ARATH</name>
<organism>
    <name type="scientific">Arabidopsis thaliana</name>
    <name type="common">Mouse-ear cress</name>
    <dbReference type="NCBI Taxonomy" id="3702"/>
    <lineage>
        <taxon>Eukaryota</taxon>
        <taxon>Viridiplantae</taxon>
        <taxon>Streptophyta</taxon>
        <taxon>Embryophyta</taxon>
        <taxon>Tracheophyta</taxon>
        <taxon>Spermatophyta</taxon>
        <taxon>Magnoliopsida</taxon>
        <taxon>eudicotyledons</taxon>
        <taxon>Gunneridae</taxon>
        <taxon>Pentapetalae</taxon>
        <taxon>rosids</taxon>
        <taxon>malvids</taxon>
        <taxon>Brassicales</taxon>
        <taxon>Brassicaceae</taxon>
        <taxon>Camelineae</taxon>
        <taxon>Arabidopsis</taxon>
    </lineage>
</organism>
<comment type="function">
    <text evidence="7">Involved in transport of phospholipids.</text>
</comment>
<comment type="catalytic activity">
    <reaction evidence="7">
        <text>ATP + H2O + phospholipidSide 1 = ADP + phosphate + phospholipidSide 2.</text>
        <dbReference type="EC" id="7.6.2.1"/>
    </reaction>
</comment>
<comment type="subcellular location">
    <subcellularLocation>
        <location evidence="3">Membrane</location>
        <topology evidence="3">Multi-pass membrane protein</topology>
    </subcellularLocation>
</comment>
<comment type="similarity">
    <text evidence="6">Belongs to the cation transport ATPase (P-type) (TC 3.A.3) family. Type IV subfamily.</text>
</comment>
<comment type="sequence caution" evidence="6">
    <conflict type="erroneous gene model prediction">
        <sequence resource="EMBL-CDS" id="AAF79467"/>
    </conflict>
</comment>
<feature type="chain" id="PRO_0000046388" description="Probable phospholipid-transporting ATPase 4">
    <location>
        <begin position="1"/>
        <end position="1216"/>
    </location>
</feature>
<feature type="topological domain" description="Cytoplasmic" evidence="3">
    <location>
        <begin position="1"/>
        <end position="74"/>
    </location>
</feature>
<feature type="transmembrane region" description="Helical" evidence="3">
    <location>
        <begin position="75"/>
        <end position="96"/>
    </location>
</feature>
<feature type="topological domain" description="Extracellular" evidence="3">
    <location>
        <begin position="97"/>
        <end position="100"/>
    </location>
</feature>
<feature type="transmembrane region" description="Helical" evidence="3">
    <location>
        <begin position="101"/>
        <end position="123"/>
    </location>
</feature>
<feature type="topological domain" description="Cytoplasmic" evidence="3">
    <location>
        <begin position="124"/>
        <end position="305"/>
    </location>
</feature>
<feature type="transmembrane region" description="Helical" evidence="3">
    <location>
        <begin position="306"/>
        <end position="327"/>
    </location>
</feature>
<feature type="topological domain" description="Extracellular" evidence="3">
    <location>
        <begin position="328"/>
        <end position="359"/>
    </location>
</feature>
<feature type="transmembrane region" description="Helical" evidence="3">
    <location>
        <begin position="360"/>
        <end position="377"/>
    </location>
</feature>
<feature type="topological domain" description="Cytoplasmic" evidence="3">
    <location>
        <begin position="378"/>
        <end position="922"/>
    </location>
</feature>
<feature type="transmembrane region" description="Helical" evidence="3">
    <location>
        <begin position="923"/>
        <end position="942"/>
    </location>
</feature>
<feature type="topological domain" description="Extracellular" evidence="3">
    <location>
        <begin position="943"/>
        <end position="956"/>
    </location>
</feature>
<feature type="transmembrane region" description="Helical" evidence="3">
    <location>
        <begin position="957"/>
        <end position="976"/>
    </location>
</feature>
<feature type="topological domain" description="Cytoplasmic" evidence="3">
    <location>
        <begin position="977"/>
        <end position="1006"/>
    </location>
</feature>
<feature type="transmembrane region" description="Helical" evidence="3">
    <location>
        <begin position="1007"/>
        <end position="1029"/>
    </location>
</feature>
<feature type="topological domain" description="Extracellular" evidence="3">
    <location>
        <begin position="1030"/>
        <end position="1042"/>
    </location>
</feature>
<feature type="transmembrane region" description="Helical" evidence="3">
    <location>
        <begin position="1043"/>
        <end position="1065"/>
    </location>
</feature>
<feature type="topological domain" description="Cytoplasmic" evidence="3">
    <location>
        <begin position="1066"/>
        <end position="1071"/>
    </location>
</feature>
<feature type="transmembrane region" description="Helical" evidence="3">
    <location>
        <begin position="1072"/>
        <end position="1092"/>
    </location>
</feature>
<feature type="topological domain" description="Extracellular" evidence="3">
    <location>
        <begin position="1093"/>
        <end position="1109"/>
    </location>
</feature>
<feature type="transmembrane region" description="Helical" evidence="3">
    <location>
        <begin position="1110"/>
        <end position="1134"/>
    </location>
</feature>
<feature type="topological domain" description="Cytoplasmic" evidence="3">
    <location>
        <begin position="1135"/>
        <end position="1216"/>
    </location>
</feature>
<feature type="region of interest" description="Disordered" evidence="4">
    <location>
        <begin position="1195"/>
        <end position="1216"/>
    </location>
</feature>
<feature type="compositionally biased region" description="Polar residues" evidence="4">
    <location>
        <begin position="1198"/>
        <end position="1216"/>
    </location>
</feature>
<feature type="active site" description="4-aspartylphosphate intermediate" evidence="1">
    <location>
        <position position="425"/>
    </location>
</feature>
<feature type="binding site" evidence="1">
    <location>
        <position position="867"/>
    </location>
    <ligand>
        <name>Mg(2+)</name>
        <dbReference type="ChEBI" id="CHEBI:18420"/>
    </ligand>
</feature>
<feature type="binding site" evidence="1">
    <location>
        <position position="871"/>
    </location>
    <ligand>
        <name>Mg(2+)</name>
        <dbReference type="ChEBI" id="CHEBI:18420"/>
    </ligand>
</feature>
<feature type="cross-link" description="Glycyl lysine isopeptide (Lys-Gly) (interchain with G-Cter in ubiquitin)" evidence="2">
    <location>
        <position position="605"/>
    </location>
</feature>
<proteinExistence type="inferred from homology"/>
<keyword id="KW-0067">ATP-binding</keyword>
<keyword id="KW-1017">Isopeptide bond</keyword>
<keyword id="KW-0460">Magnesium</keyword>
<keyword id="KW-0472">Membrane</keyword>
<keyword id="KW-0479">Metal-binding</keyword>
<keyword id="KW-0547">Nucleotide-binding</keyword>
<keyword id="KW-1185">Reference proteome</keyword>
<keyword id="KW-1278">Translocase</keyword>
<keyword id="KW-0812">Transmembrane</keyword>
<keyword id="KW-1133">Transmembrane helix</keyword>
<keyword id="KW-0832">Ubl conjugation</keyword>